<keyword id="KW-1003">Cell membrane</keyword>
<keyword id="KW-0407">Ion channel</keyword>
<keyword id="KW-0406">Ion transport</keyword>
<keyword id="KW-0472">Membrane</keyword>
<keyword id="KW-0479">Metal-binding</keyword>
<keyword id="KW-0915">Sodium</keyword>
<keyword id="KW-0812">Transmembrane</keyword>
<keyword id="KW-1133">Transmembrane helix</keyword>
<keyword id="KW-0813">Transport</keyword>
<organism>
    <name type="scientific">Lactobacillus johnsonii (strain CNCM I-12250 / La1 / NCC 533)</name>
    <dbReference type="NCBI Taxonomy" id="257314"/>
    <lineage>
        <taxon>Bacteria</taxon>
        <taxon>Bacillati</taxon>
        <taxon>Bacillota</taxon>
        <taxon>Bacilli</taxon>
        <taxon>Lactobacillales</taxon>
        <taxon>Lactobacillaceae</taxon>
        <taxon>Lactobacillus</taxon>
    </lineage>
</organism>
<evidence type="ECO:0000255" key="1">
    <source>
        <dbReference type="HAMAP-Rule" id="MF_00454"/>
    </source>
</evidence>
<gene>
    <name evidence="1" type="primary">fluC2</name>
    <name evidence="1" type="synonym">crcB2</name>
    <name type="ordered locus">LJ_0897</name>
</gene>
<accession>P61391</accession>
<comment type="function">
    <text evidence="1">Fluoride-specific ion channel. Important for reducing fluoride concentration in the cell, thus reducing its toxicity.</text>
</comment>
<comment type="catalytic activity">
    <reaction evidence="1">
        <text>fluoride(in) = fluoride(out)</text>
        <dbReference type="Rhea" id="RHEA:76159"/>
        <dbReference type="ChEBI" id="CHEBI:17051"/>
    </reaction>
    <physiologicalReaction direction="left-to-right" evidence="1">
        <dbReference type="Rhea" id="RHEA:76160"/>
    </physiologicalReaction>
</comment>
<comment type="activity regulation">
    <text evidence="1">Na(+) is not transported, but it plays an essential structural role and its presence is essential for fluoride channel function.</text>
</comment>
<comment type="subcellular location">
    <subcellularLocation>
        <location evidence="1">Cell membrane</location>
        <topology evidence="1">Multi-pass membrane protein</topology>
    </subcellularLocation>
</comment>
<comment type="similarity">
    <text evidence="1">Belongs to the fluoride channel Fluc/FEX (TC 1.A.43) family.</text>
</comment>
<reference key="1">
    <citation type="journal article" date="2004" name="Proc. Natl. Acad. Sci. U.S.A.">
        <title>The genome sequence of the probiotic intestinal bacterium Lactobacillus johnsonii NCC 533.</title>
        <authorList>
            <person name="Pridmore R.D."/>
            <person name="Berger B."/>
            <person name="Desiere F."/>
            <person name="Vilanova D."/>
            <person name="Barretto C."/>
            <person name="Pittet A.-C."/>
            <person name="Zwahlen M.-C."/>
            <person name="Rouvet M."/>
            <person name="Altermann E."/>
            <person name="Barrangou R."/>
            <person name="Mollet B."/>
            <person name="Mercenier A."/>
            <person name="Klaenhammer T."/>
            <person name="Arigoni F."/>
            <person name="Schell M.A."/>
        </authorList>
    </citation>
    <scope>NUCLEOTIDE SEQUENCE [LARGE SCALE GENOMIC DNA]</scope>
    <source>
        <strain>CNCM I-1225 / La1 / NCC 533</strain>
    </source>
</reference>
<feature type="chain" id="PRO_0000110115" description="Fluoride-specific ion channel FluC 2">
    <location>
        <begin position="1"/>
        <end position="119"/>
    </location>
</feature>
<feature type="transmembrane region" description="Helical" evidence="1">
    <location>
        <begin position="1"/>
        <end position="21"/>
    </location>
</feature>
<feature type="transmembrane region" description="Helical" evidence="1">
    <location>
        <begin position="33"/>
        <end position="53"/>
    </location>
</feature>
<feature type="transmembrane region" description="Helical" evidence="1">
    <location>
        <begin position="56"/>
        <end position="76"/>
    </location>
</feature>
<feature type="transmembrane region" description="Helical" evidence="1">
    <location>
        <begin position="93"/>
        <end position="113"/>
    </location>
</feature>
<feature type="binding site" evidence="1">
    <location>
        <position position="70"/>
    </location>
    <ligand>
        <name>Na(+)</name>
        <dbReference type="ChEBI" id="CHEBI:29101"/>
        <note>structural</note>
    </ligand>
</feature>
<feature type="binding site" evidence="1">
    <location>
        <position position="73"/>
    </location>
    <ligand>
        <name>Na(+)</name>
        <dbReference type="ChEBI" id="CHEBI:29101"/>
        <note>structural</note>
    </ligand>
</feature>
<name>FLUC2_LACJO</name>
<proteinExistence type="inferred from homology"/>
<dbReference type="EMBL" id="AE017198">
    <property type="protein sequence ID" value="AAS08718.1"/>
    <property type="molecule type" value="Genomic_DNA"/>
</dbReference>
<dbReference type="SMR" id="P61391"/>
<dbReference type="KEGG" id="ljo:LJ_0897"/>
<dbReference type="PATRIC" id="fig|257314.6.peg.754"/>
<dbReference type="eggNOG" id="COG0239">
    <property type="taxonomic scope" value="Bacteria"/>
</dbReference>
<dbReference type="HOGENOM" id="CLU_114342_2_3_9"/>
<dbReference type="Proteomes" id="UP000000581">
    <property type="component" value="Chromosome"/>
</dbReference>
<dbReference type="GO" id="GO:0005886">
    <property type="term" value="C:plasma membrane"/>
    <property type="evidence" value="ECO:0007669"/>
    <property type="project" value="UniProtKB-SubCell"/>
</dbReference>
<dbReference type="GO" id="GO:0062054">
    <property type="term" value="F:fluoride channel activity"/>
    <property type="evidence" value="ECO:0007669"/>
    <property type="project" value="UniProtKB-UniRule"/>
</dbReference>
<dbReference type="GO" id="GO:0046872">
    <property type="term" value="F:metal ion binding"/>
    <property type="evidence" value="ECO:0007669"/>
    <property type="project" value="UniProtKB-KW"/>
</dbReference>
<dbReference type="GO" id="GO:0140114">
    <property type="term" value="P:cellular detoxification of fluoride"/>
    <property type="evidence" value="ECO:0007669"/>
    <property type="project" value="UniProtKB-UniRule"/>
</dbReference>
<dbReference type="HAMAP" id="MF_00454">
    <property type="entry name" value="FluC"/>
    <property type="match status" value="1"/>
</dbReference>
<dbReference type="InterPro" id="IPR003691">
    <property type="entry name" value="FluC"/>
</dbReference>
<dbReference type="NCBIfam" id="NF010816">
    <property type="entry name" value="PRK14220.1"/>
    <property type="match status" value="1"/>
</dbReference>
<dbReference type="PANTHER" id="PTHR28259">
    <property type="entry name" value="FLUORIDE EXPORT PROTEIN 1-RELATED"/>
    <property type="match status" value="1"/>
</dbReference>
<dbReference type="PANTHER" id="PTHR28259:SF16">
    <property type="entry name" value="FLUORIDE-SPECIFIC ION CHANNEL FLUC 2"/>
    <property type="match status" value="1"/>
</dbReference>
<dbReference type="Pfam" id="PF02537">
    <property type="entry name" value="CRCB"/>
    <property type="match status" value="1"/>
</dbReference>
<protein>
    <recommendedName>
        <fullName evidence="1">Fluoride-specific ion channel FluC 2</fullName>
    </recommendedName>
</protein>
<sequence length="119" mass="13221">MITVLTAGFGAIWGAILRYGITNYGKKHWSEKFPYATLLINLTGAFLLGFIFSRKFSPFIYALIGTGVLGGYTTFSTLNVELLSHWRDRNYSVFTLYALLSYGGGLILVFLGYKVGTLI</sequence>